<sequence>MHKAIMHPLILLLKIYKRLISPLLGPHCRFEPSCSEYAMGAIARFGTLRGIWLAARRLARCQPLQPGGYDPVPDNISTQVNPPSHRCTGHHQ</sequence>
<feature type="chain" id="PRO_0000171899" description="Putative membrane protein insertion efficiency factor">
    <location>
        <begin position="1"/>
        <end position="92"/>
    </location>
</feature>
<feature type="region of interest" description="Disordered" evidence="2">
    <location>
        <begin position="69"/>
        <end position="92"/>
    </location>
</feature>
<gene>
    <name type="ordered locus">XF_0989</name>
</gene>
<dbReference type="EMBL" id="AE003849">
    <property type="protein sequence ID" value="AAF83799.1"/>
    <property type="status" value="ALT_INIT"/>
    <property type="molecule type" value="Genomic_DNA"/>
</dbReference>
<dbReference type="PIR" id="E82736">
    <property type="entry name" value="E82736"/>
</dbReference>
<dbReference type="STRING" id="160492.XF_0989"/>
<dbReference type="KEGG" id="xfa:XF_0989"/>
<dbReference type="eggNOG" id="COG0759">
    <property type="taxonomic scope" value="Bacteria"/>
</dbReference>
<dbReference type="HOGENOM" id="CLU_144811_2_2_6"/>
<dbReference type="Proteomes" id="UP000000812">
    <property type="component" value="Chromosome"/>
</dbReference>
<dbReference type="GO" id="GO:0005886">
    <property type="term" value="C:plasma membrane"/>
    <property type="evidence" value="ECO:0007669"/>
    <property type="project" value="UniProtKB-SubCell"/>
</dbReference>
<dbReference type="HAMAP" id="MF_00386">
    <property type="entry name" value="UPF0161_YidD"/>
    <property type="match status" value="1"/>
</dbReference>
<dbReference type="InterPro" id="IPR002696">
    <property type="entry name" value="Membr_insert_effic_factor_YidD"/>
</dbReference>
<dbReference type="NCBIfam" id="TIGR00278">
    <property type="entry name" value="membrane protein insertion efficiency factor YidD"/>
    <property type="match status" value="1"/>
</dbReference>
<dbReference type="PANTHER" id="PTHR33383">
    <property type="entry name" value="MEMBRANE PROTEIN INSERTION EFFICIENCY FACTOR-RELATED"/>
    <property type="match status" value="1"/>
</dbReference>
<dbReference type="PANTHER" id="PTHR33383:SF1">
    <property type="entry name" value="MEMBRANE PROTEIN INSERTION EFFICIENCY FACTOR-RELATED"/>
    <property type="match status" value="1"/>
</dbReference>
<dbReference type="Pfam" id="PF01809">
    <property type="entry name" value="YidD"/>
    <property type="match status" value="1"/>
</dbReference>
<dbReference type="SMART" id="SM01234">
    <property type="entry name" value="Haemolytic"/>
    <property type="match status" value="1"/>
</dbReference>
<name>YIDD_XYLFA</name>
<accession>Q9PEN9</accession>
<keyword id="KW-0997">Cell inner membrane</keyword>
<keyword id="KW-1003">Cell membrane</keyword>
<keyword id="KW-0472">Membrane</keyword>
<comment type="function">
    <text evidence="1">Could be involved in insertion of integral membrane proteins into the membrane.</text>
</comment>
<comment type="subcellular location">
    <subcellularLocation>
        <location evidence="1">Cell inner membrane</location>
        <topology evidence="1">Peripheral membrane protein</topology>
        <orientation evidence="1">Cytoplasmic side</orientation>
    </subcellularLocation>
</comment>
<comment type="similarity">
    <text evidence="1">Belongs to the UPF0161 family.</text>
</comment>
<comment type="sequence caution" evidence="3">
    <conflict type="erroneous initiation">
        <sequence resource="EMBL-CDS" id="AAF83799"/>
    </conflict>
</comment>
<organism>
    <name type="scientific">Xylella fastidiosa (strain 9a5c)</name>
    <dbReference type="NCBI Taxonomy" id="160492"/>
    <lineage>
        <taxon>Bacteria</taxon>
        <taxon>Pseudomonadati</taxon>
        <taxon>Pseudomonadota</taxon>
        <taxon>Gammaproteobacteria</taxon>
        <taxon>Lysobacterales</taxon>
        <taxon>Lysobacteraceae</taxon>
        <taxon>Xylella</taxon>
    </lineage>
</organism>
<proteinExistence type="inferred from homology"/>
<reference key="1">
    <citation type="journal article" date="2000" name="Nature">
        <title>The genome sequence of the plant pathogen Xylella fastidiosa.</title>
        <authorList>
            <person name="Simpson A.J.G."/>
            <person name="Reinach F.C."/>
            <person name="Arruda P."/>
            <person name="Abreu F.A."/>
            <person name="Acencio M."/>
            <person name="Alvarenga R."/>
            <person name="Alves L.M.C."/>
            <person name="Araya J.E."/>
            <person name="Baia G.S."/>
            <person name="Baptista C.S."/>
            <person name="Barros M.H."/>
            <person name="Bonaccorsi E.D."/>
            <person name="Bordin S."/>
            <person name="Bove J.M."/>
            <person name="Briones M.R.S."/>
            <person name="Bueno M.R.P."/>
            <person name="Camargo A.A."/>
            <person name="Camargo L.E.A."/>
            <person name="Carraro D.M."/>
            <person name="Carrer H."/>
            <person name="Colauto N.B."/>
            <person name="Colombo C."/>
            <person name="Costa F.F."/>
            <person name="Costa M.C.R."/>
            <person name="Costa-Neto C.M."/>
            <person name="Coutinho L.L."/>
            <person name="Cristofani M."/>
            <person name="Dias-Neto E."/>
            <person name="Docena C."/>
            <person name="El-Dorry H."/>
            <person name="Facincani A.P."/>
            <person name="Ferreira A.J.S."/>
            <person name="Ferreira V.C.A."/>
            <person name="Ferro J.A."/>
            <person name="Fraga J.S."/>
            <person name="Franca S.C."/>
            <person name="Franco M.C."/>
            <person name="Frohme M."/>
            <person name="Furlan L.R."/>
            <person name="Garnier M."/>
            <person name="Goldman G.H."/>
            <person name="Goldman M.H.S."/>
            <person name="Gomes S.L."/>
            <person name="Gruber A."/>
            <person name="Ho P.L."/>
            <person name="Hoheisel J.D."/>
            <person name="Junqueira M.L."/>
            <person name="Kemper E.L."/>
            <person name="Kitajima J.P."/>
            <person name="Krieger J.E."/>
            <person name="Kuramae E.E."/>
            <person name="Laigret F."/>
            <person name="Lambais M.R."/>
            <person name="Leite L.C.C."/>
            <person name="Lemos E.G.M."/>
            <person name="Lemos M.V.F."/>
            <person name="Lopes S.A."/>
            <person name="Lopes C.R."/>
            <person name="Machado J.A."/>
            <person name="Machado M.A."/>
            <person name="Madeira A.M.B.N."/>
            <person name="Madeira H.M.F."/>
            <person name="Marino C.L."/>
            <person name="Marques M.V."/>
            <person name="Martins E.A.L."/>
            <person name="Martins E.M.F."/>
            <person name="Matsukuma A.Y."/>
            <person name="Menck C.F.M."/>
            <person name="Miracca E.C."/>
            <person name="Miyaki C.Y."/>
            <person name="Monteiro-Vitorello C.B."/>
            <person name="Moon D.H."/>
            <person name="Nagai M.A."/>
            <person name="Nascimento A.L.T.O."/>
            <person name="Netto L.E.S."/>
            <person name="Nhani A. Jr."/>
            <person name="Nobrega F.G."/>
            <person name="Nunes L.R."/>
            <person name="Oliveira M.A."/>
            <person name="de Oliveira M.C."/>
            <person name="de Oliveira R.C."/>
            <person name="Palmieri D.A."/>
            <person name="Paris A."/>
            <person name="Peixoto B.R."/>
            <person name="Pereira G.A.G."/>
            <person name="Pereira H.A. Jr."/>
            <person name="Pesquero J.B."/>
            <person name="Quaggio R.B."/>
            <person name="Roberto P.G."/>
            <person name="Rodrigues V."/>
            <person name="de Rosa A.J.M."/>
            <person name="de Rosa V.E. Jr."/>
            <person name="de Sa R.G."/>
            <person name="Santelli R.V."/>
            <person name="Sawasaki H.E."/>
            <person name="da Silva A.C.R."/>
            <person name="da Silva A.M."/>
            <person name="da Silva F.R."/>
            <person name="Silva W.A. Jr."/>
            <person name="da Silveira J.F."/>
            <person name="Silvestri M.L.Z."/>
            <person name="Siqueira W.J."/>
            <person name="de Souza A.A."/>
            <person name="de Souza A.P."/>
            <person name="Terenzi M.F."/>
            <person name="Truffi D."/>
            <person name="Tsai S.M."/>
            <person name="Tsuhako M.H."/>
            <person name="Vallada H."/>
            <person name="Van Sluys M.A."/>
            <person name="Verjovski-Almeida S."/>
            <person name="Vettore A.L."/>
            <person name="Zago M.A."/>
            <person name="Zatz M."/>
            <person name="Meidanis J."/>
            <person name="Setubal J.C."/>
        </authorList>
    </citation>
    <scope>NUCLEOTIDE SEQUENCE [LARGE SCALE GENOMIC DNA]</scope>
    <source>
        <strain>9a5c</strain>
    </source>
</reference>
<evidence type="ECO:0000255" key="1">
    <source>
        <dbReference type="HAMAP-Rule" id="MF_00386"/>
    </source>
</evidence>
<evidence type="ECO:0000256" key="2">
    <source>
        <dbReference type="SAM" id="MobiDB-lite"/>
    </source>
</evidence>
<evidence type="ECO:0000305" key="3"/>
<protein>
    <recommendedName>
        <fullName evidence="1">Putative membrane protein insertion efficiency factor</fullName>
    </recommendedName>
</protein>